<organism>
    <name type="scientific">Salmonella arizonae (strain ATCC BAA-731 / CDC346-86 / RSK2980)</name>
    <dbReference type="NCBI Taxonomy" id="41514"/>
    <lineage>
        <taxon>Bacteria</taxon>
        <taxon>Pseudomonadati</taxon>
        <taxon>Pseudomonadota</taxon>
        <taxon>Gammaproteobacteria</taxon>
        <taxon>Enterobacterales</taxon>
        <taxon>Enterobacteriaceae</taxon>
        <taxon>Salmonella</taxon>
    </lineage>
</organism>
<feature type="chain" id="PRO_0000381596" description="Biotin synthase">
    <location>
        <begin position="1"/>
        <end position="346"/>
    </location>
</feature>
<feature type="domain" description="Radical SAM core" evidence="2">
    <location>
        <begin position="38"/>
        <end position="256"/>
    </location>
</feature>
<feature type="binding site" evidence="1">
    <location>
        <position position="53"/>
    </location>
    <ligand>
        <name>[4Fe-4S] cluster</name>
        <dbReference type="ChEBI" id="CHEBI:49883"/>
        <note>4Fe-4S-S-AdoMet</note>
    </ligand>
</feature>
<feature type="binding site" evidence="1">
    <location>
        <position position="57"/>
    </location>
    <ligand>
        <name>[4Fe-4S] cluster</name>
        <dbReference type="ChEBI" id="CHEBI:49883"/>
        <note>4Fe-4S-S-AdoMet</note>
    </ligand>
</feature>
<feature type="binding site" evidence="1">
    <location>
        <position position="60"/>
    </location>
    <ligand>
        <name>[4Fe-4S] cluster</name>
        <dbReference type="ChEBI" id="CHEBI:49883"/>
        <note>4Fe-4S-S-AdoMet</note>
    </ligand>
</feature>
<feature type="binding site" evidence="1">
    <location>
        <position position="97"/>
    </location>
    <ligand>
        <name>[2Fe-2S] cluster</name>
        <dbReference type="ChEBI" id="CHEBI:190135"/>
    </ligand>
</feature>
<feature type="binding site" evidence="1">
    <location>
        <position position="128"/>
    </location>
    <ligand>
        <name>[2Fe-2S] cluster</name>
        <dbReference type="ChEBI" id="CHEBI:190135"/>
    </ligand>
</feature>
<feature type="binding site" evidence="1">
    <location>
        <position position="188"/>
    </location>
    <ligand>
        <name>[2Fe-2S] cluster</name>
        <dbReference type="ChEBI" id="CHEBI:190135"/>
    </ligand>
</feature>
<feature type="binding site" evidence="1">
    <location>
        <position position="260"/>
    </location>
    <ligand>
        <name>[2Fe-2S] cluster</name>
        <dbReference type="ChEBI" id="CHEBI:190135"/>
    </ligand>
</feature>
<gene>
    <name evidence="1" type="primary">bioB</name>
    <name type="ordered locus">SARI_02132</name>
</gene>
<dbReference type="EC" id="2.8.1.6" evidence="1"/>
<dbReference type="EMBL" id="CP000880">
    <property type="protein sequence ID" value="ABX22009.1"/>
    <property type="molecule type" value="Genomic_DNA"/>
</dbReference>
<dbReference type="SMR" id="A9MJE6"/>
<dbReference type="STRING" id="41514.SARI_02132"/>
<dbReference type="KEGG" id="ses:SARI_02132"/>
<dbReference type="HOGENOM" id="CLU_033172_1_2_6"/>
<dbReference type="UniPathway" id="UPA00078">
    <property type="reaction ID" value="UER00162"/>
</dbReference>
<dbReference type="Proteomes" id="UP000002084">
    <property type="component" value="Chromosome"/>
</dbReference>
<dbReference type="GO" id="GO:0051537">
    <property type="term" value="F:2 iron, 2 sulfur cluster binding"/>
    <property type="evidence" value="ECO:0007669"/>
    <property type="project" value="UniProtKB-KW"/>
</dbReference>
<dbReference type="GO" id="GO:0051539">
    <property type="term" value="F:4 iron, 4 sulfur cluster binding"/>
    <property type="evidence" value="ECO:0007669"/>
    <property type="project" value="UniProtKB-KW"/>
</dbReference>
<dbReference type="GO" id="GO:0004076">
    <property type="term" value="F:biotin synthase activity"/>
    <property type="evidence" value="ECO:0007669"/>
    <property type="project" value="UniProtKB-UniRule"/>
</dbReference>
<dbReference type="GO" id="GO:0005506">
    <property type="term" value="F:iron ion binding"/>
    <property type="evidence" value="ECO:0007669"/>
    <property type="project" value="UniProtKB-UniRule"/>
</dbReference>
<dbReference type="GO" id="GO:0009102">
    <property type="term" value="P:biotin biosynthetic process"/>
    <property type="evidence" value="ECO:0007669"/>
    <property type="project" value="UniProtKB-UniRule"/>
</dbReference>
<dbReference type="CDD" id="cd01335">
    <property type="entry name" value="Radical_SAM"/>
    <property type="match status" value="1"/>
</dbReference>
<dbReference type="FunFam" id="3.20.20.70:FF:000011">
    <property type="entry name" value="Biotin synthase"/>
    <property type="match status" value="1"/>
</dbReference>
<dbReference type="Gene3D" id="3.20.20.70">
    <property type="entry name" value="Aldolase class I"/>
    <property type="match status" value="1"/>
</dbReference>
<dbReference type="HAMAP" id="MF_01694">
    <property type="entry name" value="BioB"/>
    <property type="match status" value="1"/>
</dbReference>
<dbReference type="InterPro" id="IPR013785">
    <property type="entry name" value="Aldolase_TIM"/>
</dbReference>
<dbReference type="InterPro" id="IPR010722">
    <property type="entry name" value="BATS_dom"/>
</dbReference>
<dbReference type="InterPro" id="IPR002684">
    <property type="entry name" value="Biotin_synth/BioAB"/>
</dbReference>
<dbReference type="InterPro" id="IPR024177">
    <property type="entry name" value="Biotin_synthase"/>
</dbReference>
<dbReference type="InterPro" id="IPR006638">
    <property type="entry name" value="Elp3/MiaA/NifB-like_rSAM"/>
</dbReference>
<dbReference type="InterPro" id="IPR007197">
    <property type="entry name" value="rSAM"/>
</dbReference>
<dbReference type="NCBIfam" id="TIGR00433">
    <property type="entry name" value="bioB"/>
    <property type="match status" value="1"/>
</dbReference>
<dbReference type="PANTHER" id="PTHR22976">
    <property type="entry name" value="BIOTIN SYNTHASE"/>
    <property type="match status" value="1"/>
</dbReference>
<dbReference type="PANTHER" id="PTHR22976:SF2">
    <property type="entry name" value="BIOTIN SYNTHASE, MITOCHONDRIAL"/>
    <property type="match status" value="1"/>
</dbReference>
<dbReference type="Pfam" id="PF06968">
    <property type="entry name" value="BATS"/>
    <property type="match status" value="1"/>
</dbReference>
<dbReference type="Pfam" id="PF04055">
    <property type="entry name" value="Radical_SAM"/>
    <property type="match status" value="1"/>
</dbReference>
<dbReference type="PIRSF" id="PIRSF001619">
    <property type="entry name" value="Biotin_synth"/>
    <property type="match status" value="1"/>
</dbReference>
<dbReference type="SFLD" id="SFLDF00272">
    <property type="entry name" value="biotin_synthase"/>
    <property type="match status" value="1"/>
</dbReference>
<dbReference type="SFLD" id="SFLDS00029">
    <property type="entry name" value="Radical_SAM"/>
    <property type="match status" value="1"/>
</dbReference>
<dbReference type="SMART" id="SM00876">
    <property type="entry name" value="BATS"/>
    <property type="match status" value="1"/>
</dbReference>
<dbReference type="SMART" id="SM00729">
    <property type="entry name" value="Elp3"/>
    <property type="match status" value="1"/>
</dbReference>
<dbReference type="SUPFAM" id="SSF102114">
    <property type="entry name" value="Radical SAM enzymes"/>
    <property type="match status" value="1"/>
</dbReference>
<dbReference type="PROSITE" id="PS51918">
    <property type="entry name" value="RADICAL_SAM"/>
    <property type="match status" value="1"/>
</dbReference>
<name>BIOB_SALAR</name>
<accession>A9MJE6</accession>
<reference key="1">
    <citation type="submission" date="2007-11" db="EMBL/GenBank/DDBJ databases">
        <authorList>
            <consortium name="The Salmonella enterica serovar Arizonae Genome Sequencing Project"/>
            <person name="McClelland M."/>
            <person name="Sanderson E.K."/>
            <person name="Porwollik S."/>
            <person name="Spieth J."/>
            <person name="Clifton W.S."/>
            <person name="Fulton R."/>
            <person name="Chunyan W."/>
            <person name="Wollam A."/>
            <person name="Shah N."/>
            <person name="Pepin K."/>
            <person name="Bhonagiri V."/>
            <person name="Nash W."/>
            <person name="Johnson M."/>
            <person name="Thiruvilangam P."/>
            <person name="Wilson R."/>
        </authorList>
    </citation>
    <scope>NUCLEOTIDE SEQUENCE [LARGE SCALE GENOMIC DNA]</scope>
    <source>
        <strain>ATCC BAA-731 / CDC346-86 / RSK2980</strain>
    </source>
</reference>
<keyword id="KW-0001">2Fe-2S</keyword>
<keyword id="KW-0004">4Fe-4S</keyword>
<keyword id="KW-0093">Biotin biosynthesis</keyword>
<keyword id="KW-0408">Iron</keyword>
<keyword id="KW-0411">Iron-sulfur</keyword>
<keyword id="KW-0479">Metal-binding</keyword>
<keyword id="KW-1185">Reference proteome</keyword>
<keyword id="KW-0949">S-adenosyl-L-methionine</keyword>
<keyword id="KW-0808">Transferase</keyword>
<sequence>MARHPRWTLSQVTELFEKPLLELLFEAQQIHRQHFDPKQIQVSTLLSIKTGACPEDCKYCPQSSRYKTGLEAERLMEVEQVLESARKAKNAGSTRFCMGAAWKNPRERDMPYLEQIVQGVKAMGLETCMTLGMLNESQAQRLANAGLDYYNHNLDTSPEFYGNIITTRTYQERLDTLEKVREAGIKVCSGGIVGLGETVNDRAGLLLQLANLPTPPESVPINMLVKVKGTPLADNDDVDAFDFIRTIAVARIMMPTSYVRLSAGREQMNEQTQAMCFMAGANSIFYGCKLLTTPNPAEDKDLQLFRKLGLNPQQTRVLAGDNEQQQRLEQTLMTPDTDDYYNAAAL</sequence>
<proteinExistence type="inferred from homology"/>
<evidence type="ECO:0000255" key="1">
    <source>
        <dbReference type="HAMAP-Rule" id="MF_01694"/>
    </source>
</evidence>
<evidence type="ECO:0000255" key="2">
    <source>
        <dbReference type="PROSITE-ProRule" id="PRU01266"/>
    </source>
</evidence>
<comment type="function">
    <text evidence="1">Catalyzes the conversion of dethiobiotin (DTB) to biotin by the insertion of a sulfur atom into dethiobiotin via a radical-based mechanism.</text>
</comment>
<comment type="catalytic activity">
    <reaction evidence="1">
        <text>(4R,5S)-dethiobiotin + (sulfur carrier)-SH + 2 reduced [2Fe-2S]-[ferredoxin] + 2 S-adenosyl-L-methionine = (sulfur carrier)-H + biotin + 2 5'-deoxyadenosine + 2 L-methionine + 2 oxidized [2Fe-2S]-[ferredoxin]</text>
        <dbReference type="Rhea" id="RHEA:22060"/>
        <dbReference type="Rhea" id="RHEA-COMP:10000"/>
        <dbReference type="Rhea" id="RHEA-COMP:10001"/>
        <dbReference type="Rhea" id="RHEA-COMP:14737"/>
        <dbReference type="Rhea" id="RHEA-COMP:14739"/>
        <dbReference type="ChEBI" id="CHEBI:17319"/>
        <dbReference type="ChEBI" id="CHEBI:29917"/>
        <dbReference type="ChEBI" id="CHEBI:33737"/>
        <dbReference type="ChEBI" id="CHEBI:33738"/>
        <dbReference type="ChEBI" id="CHEBI:57586"/>
        <dbReference type="ChEBI" id="CHEBI:57844"/>
        <dbReference type="ChEBI" id="CHEBI:59789"/>
        <dbReference type="ChEBI" id="CHEBI:64428"/>
        <dbReference type="ChEBI" id="CHEBI:149473"/>
        <dbReference type="EC" id="2.8.1.6"/>
    </reaction>
</comment>
<comment type="cofactor">
    <cofactor evidence="1">
        <name>[4Fe-4S] cluster</name>
        <dbReference type="ChEBI" id="CHEBI:49883"/>
    </cofactor>
    <text evidence="1">Binds 1 [4Fe-4S] cluster. The cluster is coordinated with 3 cysteines and an exchangeable S-adenosyl-L-methionine.</text>
</comment>
<comment type="cofactor">
    <cofactor evidence="1">
        <name>[2Fe-2S] cluster</name>
        <dbReference type="ChEBI" id="CHEBI:190135"/>
    </cofactor>
    <text evidence="1">Binds 1 [2Fe-2S] cluster. The cluster is coordinated with 3 cysteines and 1 arginine.</text>
</comment>
<comment type="pathway">
    <text evidence="1">Cofactor biosynthesis; biotin biosynthesis; biotin from 7,8-diaminononanoate: step 2/2.</text>
</comment>
<comment type="subunit">
    <text evidence="1">Homodimer.</text>
</comment>
<comment type="similarity">
    <text evidence="1">Belongs to the radical SAM superfamily. Biotin synthase family.</text>
</comment>
<protein>
    <recommendedName>
        <fullName evidence="1">Biotin synthase</fullName>
        <ecNumber evidence="1">2.8.1.6</ecNumber>
    </recommendedName>
</protein>